<reference key="1">
    <citation type="submission" date="1998-02" db="EMBL/GenBank/DDBJ databases">
        <title>Chloroplast rpl23 gene cluster of Spirogyra maxima (Charophyceae), shared by land plants.</title>
        <authorList>
            <person name="Lee J."/>
            <person name="Manhart J.R."/>
        </authorList>
    </citation>
    <scope>NUCLEOTIDE SEQUENCE [GENOMIC DNA]</scope>
    <source>
        <strain>UTEX LB 2495</strain>
    </source>
</reference>
<keyword id="KW-0150">Chloroplast</keyword>
<keyword id="KW-0934">Plastid</keyword>
<keyword id="KW-0687">Ribonucleoprotein</keyword>
<keyword id="KW-0689">Ribosomal protein</keyword>
<keyword id="KW-0694">RNA-binding</keyword>
<keyword id="KW-0699">rRNA-binding</keyword>
<feature type="chain" id="PRO_0000129993" description="Small ribosomal subunit protein uS19c">
    <location>
        <begin position="1"/>
        <end position="92"/>
    </location>
</feature>
<evidence type="ECO:0000255" key="1">
    <source>
        <dbReference type="HAMAP-Rule" id="MF_00531"/>
    </source>
</evidence>
<evidence type="ECO:0000305" key="2"/>
<proteinExistence type="inferred from homology"/>
<accession>O98453</accession>
<organism>
    <name type="scientific">Spirogyra maxima</name>
    <name type="common">Green alga</name>
    <dbReference type="NCBI Taxonomy" id="3180"/>
    <lineage>
        <taxon>Eukaryota</taxon>
        <taxon>Viridiplantae</taxon>
        <taxon>Streptophyta</taxon>
        <taxon>Zygnematophyceae</taxon>
        <taxon>Zygnematophycidae</taxon>
        <taxon>Zygnematales</taxon>
        <taxon>Zygnemataceae</taxon>
        <taxon>Spirogyra</taxon>
    </lineage>
</organism>
<geneLocation type="chloroplast"/>
<name>RR19_SPIMX</name>
<gene>
    <name evidence="1" type="primary">rps19</name>
</gene>
<protein>
    <recommendedName>
        <fullName evidence="1">Small ribosomal subunit protein uS19c</fullName>
    </recommendedName>
    <alternativeName>
        <fullName evidence="2">30S ribosomal protein S19, chloroplastic</fullName>
    </alternativeName>
</protein>
<sequence>MTRSLKKGPNVADHLLKKIENLNSQGEKRVIVTWSRGSTIVPAMIGHTIAVYNGREHLPIFVTDLMVGHKLGEFSPTRTFRGHAKSDKKSRR</sequence>
<dbReference type="EMBL" id="AF050665">
    <property type="protein sequence ID" value="AAC95309.1"/>
    <property type="molecule type" value="Genomic_DNA"/>
</dbReference>
<dbReference type="SMR" id="O98453"/>
<dbReference type="GO" id="GO:0009507">
    <property type="term" value="C:chloroplast"/>
    <property type="evidence" value="ECO:0007669"/>
    <property type="project" value="UniProtKB-SubCell"/>
</dbReference>
<dbReference type="GO" id="GO:0005763">
    <property type="term" value="C:mitochondrial small ribosomal subunit"/>
    <property type="evidence" value="ECO:0007669"/>
    <property type="project" value="TreeGrafter"/>
</dbReference>
<dbReference type="GO" id="GO:0019843">
    <property type="term" value="F:rRNA binding"/>
    <property type="evidence" value="ECO:0007669"/>
    <property type="project" value="UniProtKB-UniRule"/>
</dbReference>
<dbReference type="GO" id="GO:0003735">
    <property type="term" value="F:structural constituent of ribosome"/>
    <property type="evidence" value="ECO:0007669"/>
    <property type="project" value="InterPro"/>
</dbReference>
<dbReference type="GO" id="GO:0000028">
    <property type="term" value="P:ribosomal small subunit assembly"/>
    <property type="evidence" value="ECO:0007669"/>
    <property type="project" value="TreeGrafter"/>
</dbReference>
<dbReference type="GO" id="GO:0006412">
    <property type="term" value="P:translation"/>
    <property type="evidence" value="ECO:0007669"/>
    <property type="project" value="UniProtKB-UniRule"/>
</dbReference>
<dbReference type="FunFam" id="3.30.860.10:FF:000001">
    <property type="entry name" value="30S ribosomal protein S19"/>
    <property type="match status" value="1"/>
</dbReference>
<dbReference type="Gene3D" id="3.30.860.10">
    <property type="entry name" value="30s Ribosomal Protein S19, Chain A"/>
    <property type="match status" value="1"/>
</dbReference>
<dbReference type="HAMAP" id="MF_00531">
    <property type="entry name" value="Ribosomal_uS19"/>
    <property type="match status" value="1"/>
</dbReference>
<dbReference type="InterPro" id="IPR002222">
    <property type="entry name" value="Ribosomal_uS19"/>
</dbReference>
<dbReference type="InterPro" id="IPR005732">
    <property type="entry name" value="Ribosomal_uS19_bac-type"/>
</dbReference>
<dbReference type="InterPro" id="IPR020934">
    <property type="entry name" value="Ribosomal_uS19_CS"/>
</dbReference>
<dbReference type="InterPro" id="IPR023575">
    <property type="entry name" value="Ribosomal_uS19_SF"/>
</dbReference>
<dbReference type="NCBIfam" id="TIGR01050">
    <property type="entry name" value="rpsS_bact"/>
    <property type="match status" value="1"/>
</dbReference>
<dbReference type="PANTHER" id="PTHR11880">
    <property type="entry name" value="RIBOSOMAL PROTEIN S19P FAMILY MEMBER"/>
    <property type="match status" value="1"/>
</dbReference>
<dbReference type="PANTHER" id="PTHR11880:SF8">
    <property type="entry name" value="SMALL RIBOSOMAL SUBUNIT PROTEIN US19M"/>
    <property type="match status" value="1"/>
</dbReference>
<dbReference type="Pfam" id="PF00203">
    <property type="entry name" value="Ribosomal_S19"/>
    <property type="match status" value="1"/>
</dbReference>
<dbReference type="PIRSF" id="PIRSF002144">
    <property type="entry name" value="Ribosomal_S19"/>
    <property type="match status" value="1"/>
</dbReference>
<dbReference type="PRINTS" id="PR00975">
    <property type="entry name" value="RIBOSOMALS19"/>
</dbReference>
<dbReference type="SUPFAM" id="SSF54570">
    <property type="entry name" value="Ribosomal protein S19"/>
    <property type="match status" value="1"/>
</dbReference>
<dbReference type="PROSITE" id="PS00323">
    <property type="entry name" value="RIBOSOMAL_S19"/>
    <property type="match status" value="1"/>
</dbReference>
<comment type="function">
    <text evidence="1">Protein S19 forms a complex with S13 that binds strongly to the 16S ribosomal RNA.</text>
</comment>
<comment type="subcellular location">
    <subcellularLocation>
        <location>Plastid</location>
        <location>Chloroplast</location>
    </subcellularLocation>
</comment>
<comment type="similarity">
    <text evidence="1">Belongs to the universal ribosomal protein uS19 family.</text>
</comment>